<reference key="1">
    <citation type="journal article" date="2007" name="ISME J.">
        <title>Population level functional diversity in a microbial community revealed by comparative genomic and metagenomic analyses.</title>
        <authorList>
            <person name="Bhaya D."/>
            <person name="Grossman A.R."/>
            <person name="Steunou A.-S."/>
            <person name="Khuri N."/>
            <person name="Cohan F.M."/>
            <person name="Hamamura N."/>
            <person name="Melendrez M.C."/>
            <person name="Bateson M.M."/>
            <person name="Ward D.M."/>
            <person name="Heidelberg J.F."/>
        </authorList>
    </citation>
    <scope>NUCLEOTIDE SEQUENCE [LARGE SCALE GENOMIC DNA]</scope>
    <source>
        <strain>JA-2-3B'a(2-13)</strain>
    </source>
</reference>
<proteinExistence type="inferred from homology"/>
<evidence type="ECO:0000255" key="1">
    <source>
        <dbReference type="HAMAP-Rule" id="MF_00815"/>
    </source>
</evidence>
<accession>Q2JIG1</accession>
<organism>
    <name type="scientific">Synechococcus sp. (strain JA-2-3B'a(2-13))</name>
    <name type="common">Cyanobacteria bacterium Yellowstone B-Prime</name>
    <dbReference type="NCBI Taxonomy" id="321332"/>
    <lineage>
        <taxon>Bacteria</taxon>
        <taxon>Bacillati</taxon>
        <taxon>Cyanobacteriota</taxon>
        <taxon>Cyanophyceae</taxon>
        <taxon>Synechococcales</taxon>
        <taxon>Synechococcaceae</taxon>
        <taxon>Synechococcus</taxon>
    </lineage>
</organism>
<keyword id="KW-0066">ATP synthesis</keyword>
<keyword id="KW-0139">CF(1)</keyword>
<keyword id="KW-0375">Hydrogen ion transport</keyword>
<keyword id="KW-0406">Ion transport</keyword>
<keyword id="KW-0472">Membrane</keyword>
<keyword id="KW-1185">Reference proteome</keyword>
<keyword id="KW-0793">Thylakoid</keyword>
<keyword id="KW-0813">Transport</keyword>
<feature type="chain" id="PRO_1000053362" description="ATP synthase gamma chain">
    <location>
        <begin position="1"/>
        <end position="314"/>
    </location>
</feature>
<dbReference type="EMBL" id="CP000240">
    <property type="protein sequence ID" value="ABD03598.1"/>
    <property type="molecule type" value="Genomic_DNA"/>
</dbReference>
<dbReference type="RefSeq" id="WP_011434217.1">
    <property type="nucleotide sequence ID" value="NC_007776.1"/>
</dbReference>
<dbReference type="SMR" id="Q2JIG1"/>
<dbReference type="STRING" id="321332.CYB_2672"/>
<dbReference type="KEGG" id="cyb:CYB_2672"/>
<dbReference type="eggNOG" id="COG0224">
    <property type="taxonomic scope" value="Bacteria"/>
</dbReference>
<dbReference type="HOGENOM" id="CLU_050669_0_0_3"/>
<dbReference type="OrthoDB" id="9812769at2"/>
<dbReference type="Proteomes" id="UP000001938">
    <property type="component" value="Chromosome"/>
</dbReference>
<dbReference type="GO" id="GO:0031676">
    <property type="term" value="C:plasma membrane-derived thylakoid membrane"/>
    <property type="evidence" value="ECO:0007669"/>
    <property type="project" value="UniProtKB-SubCell"/>
</dbReference>
<dbReference type="GO" id="GO:0045259">
    <property type="term" value="C:proton-transporting ATP synthase complex"/>
    <property type="evidence" value="ECO:0007669"/>
    <property type="project" value="UniProtKB-KW"/>
</dbReference>
<dbReference type="GO" id="GO:0005524">
    <property type="term" value="F:ATP binding"/>
    <property type="evidence" value="ECO:0007669"/>
    <property type="project" value="UniProtKB-UniRule"/>
</dbReference>
<dbReference type="GO" id="GO:0046933">
    <property type="term" value="F:proton-transporting ATP synthase activity, rotational mechanism"/>
    <property type="evidence" value="ECO:0007669"/>
    <property type="project" value="UniProtKB-UniRule"/>
</dbReference>
<dbReference type="CDD" id="cd12151">
    <property type="entry name" value="F1-ATPase_gamma"/>
    <property type="match status" value="1"/>
</dbReference>
<dbReference type="FunFam" id="3.40.1380.10:FF:000006">
    <property type="entry name" value="ATP synthase gamma chain"/>
    <property type="match status" value="1"/>
</dbReference>
<dbReference type="FunFam" id="1.10.287.80:FF:000003">
    <property type="entry name" value="ATP synthase gamma chain, chloroplastic"/>
    <property type="match status" value="1"/>
</dbReference>
<dbReference type="FunFam" id="1.10.287.80:FF:000004">
    <property type="entry name" value="ATP synthase gamma chain, chloroplastic"/>
    <property type="match status" value="1"/>
</dbReference>
<dbReference type="Gene3D" id="3.40.1380.10">
    <property type="match status" value="1"/>
</dbReference>
<dbReference type="Gene3D" id="1.10.287.80">
    <property type="entry name" value="ATP synthase, gamma subunit, helix hairpin domain"/>
    <property type="match status" value="2"/>
</dbReference>
<dbReference type="HAMAP" id="MF_00815">
    <property type="entry name" value="ATP_synth_gamma_bact"/>
    <property type="match status" value="1"/>
</dbReference>
<dbReference type="InterPro" id="IPR035968">
    <property type="entry name" value="ATP_synth_F1_ATPase_gsu"/>
</dbReference>
<dbReference type="InterPro" id="IPR000131">
    <property type="entry name" value="ATP_synth_F1_gsu"/>
</dbReference>
<dbReference type="InterPro" id="IPR023632">
    <property type="entry name" value="ATP_synth_F1_gsu_CS"/>
</dbReference>
<dbReference type="NCBIfam" id="TIGR01146">
    <property type="entry name" value="ATPsyn_F1gamma"/>
    <property type="match status" value="1"/>
</dbReference>
<dbReference type="NCBIfam" id="NF004145">
    <property type="entry name" value="PRK05621.1-2"/>
    <property type="match status" value="1"/>
</dbReference>
<dbReference type="PANTHER" id="PTHR11693">
    <property type="entry name" value="ATP SYNTHASE GAMMA CHAIN"/>
    <property type="match status" value="1"/>
</dbReference>
<dbReference type="PANTHER" id="PTHR11693:SF41">
    <property type="entry name" value="ATP SYNTHASE GAMMA CHAIN, CHLOROPLASTIC"/>
    <property type="match status" value="1"/>
</dbReference>
<dbReference type="Pfam" id="PF00231">
    <property type="entry name" value="ATP-synt"/>
    <property type="match status" value="1"/>
</dbReference>
<dbReference type="PRINTS" id="PR00126">
    <property type="entry name" value="ATPASEGAMMA"/>
</dbReference>
<dbReference type="SUPFAM" id="SSF52943">
    <property type="entry name" value="ATP synthase (F1-ATPase), gamma subunit"/>
    <property type="match status" value="1"/>
</dbReference>
<dbReference type="PROSITE" id="PS00153">
    <property type="entry name" value="ATPASE_GAMMA"/>
    <property type="match status" value="1"/>
</dbReference>
<comment type="function">
    <text evidence="1">Produces ATP from ADP in the presence of a proton gradient across the membrane. The gamma chain is believed to be important in regulating ATPase activity and the flow of protons through the CF(0) complex.</text>
</comment>
<comment type="subunit">
    <text evidence="1">F-type ATPases have 2 components, CF(1) - the catalytic core - and CF(0) - the membrane proton channel. CF(1) has five subunits: alpha(3), beta(3), gamma(1), delta(1), epsilon(1). CF(0) has three main subunits: a, b and c.</text>
</comment>
<comment type="subcellular location">
    <subcellularLocation>
        <location evidence="1">Cellular thylakoid membrane</location>
        <topology evidence="1">Peripheral membrane protein</topology>
    </subcellularLocation>
</comment>
<comment type="similarity">
    <text evidence="1">Belongs to the ATPase gamma chain family.</text>
</comment>
<sequence>MANLKRIRDRIKAVKNTRKITEAMRLVAAARVRRAQEQVMATRPFADRLAQVFYRLQTRLRLEDVNLPLLKQRPIQTVGLLVVAGDRGLCGAYNANVIKRTEERVRELQETGQQVQLYLVGRKAVQYFQRRSAPIAKTYVNLSQIPTAAEAAQIGDQLLAAFLSEKVDKVELLYTRFVSLISSRPVVQSLLPLDPSRLATQDDEIFRLLVRGGEFTVERSKVIAAVSAPPQDMIFEQDPVQILDALLPLYLNNQLLRALQEAAASELAARMTAMNNASDNASELIRTLGLAYNKARQAAITQEILEVVAGAEAL</sequence>
<gene>
    <name evidence="1" type="primary">atpG</name>
    <name evidence="1" type="synonym">atpC</name>
    <name type="ordered locus">CYB_2672</name>
</gene>
<name>ATPG_SYNJB</name>
<protein>
    <recommendedName>
        <fullName evidence="1">ATP synthase gamma chain</fullName>
    </recommendedName>
    <alternativeName>
        <fullName evidence="1">ATP synthase F1 sector gamma subunit</fullName>
    </alternativeName>
    <alternativeName>
        <fullName evidence="1">F-ATPase gamma subunit</fullName>
    </alternativeName>
</protein>